<proteinExistence type="evidence at transcript level"/>
<organism>
    <name type="scientific">Rattus norvegicus</name>
    <name type="common">Rat</name>
    <dbReference type="NCBI Taxonomy" id="10116"/>
    <lineage>
        <taxon>Eukaryota</taxon>
        <taxon>Metazoa</taxon>
        <taxon>Chordata</taxon>
        <taxon>Craniata</taxon>
        <taxon>Vertebrata</taxon>
        <taxon>Euteleostomi</taxon>
        <taxon>Mammalia</taxon>
        <taxon>Eutheria</taxon>
        <taxon>Euarchontoglires</taxon>
        <taxon>Glires</taxon>
        <taxon>Rodentia</taxon>
        <taxon>Myomorpha</taxon>
        <taxon>Muroidea</taxon>
        <taxon>Muridae</taxon>
        <taxon>Murinae</taxon>
        <taxon>Rattus</taxon>
    </lineage>
</organism>
<sequence>MVNLEPMHTEIKMSGDVADSTDARSTFGQVESGNDRNGLDFNRQIKTEDLGDTLQQSLSHRPCHLSQGPTMMPGNQMSGDMASLHPLQQLVLVPGHLQSVSQFLLSQTPPGQQGLQPNLLSFPQQQSTLLLPQTGPGLTSQAVGRPGLSGSSLEPHLEASQHLPGPKHLPGPGGNDEPTDLEELEKFAKTFKQRRIKLGFTQGDVGLAMGKLYGNDFSQTTISRFEALNLSFKNMCKLKPLLEKWLNDAESSPSDPSASTPSSYPTLSEVFGRKRKKRTSIETNIRLTLEKRFQDNPKPSSEEISMIAEQLSMEKEVVRVWFCNRRQKEKRINCPVATPVKPPIYNSRLVSPSGSLGSLSVPPVHSTMPGTVTSSCSPGNNSRPSSPGSGLHASSPTASQNNSKAAMNPSSAAFNSSGSWYRWNHPAYLH</sequence>
<comment type="function">
    <text evidence="2 6">Transcription factor that binds to the octamer motif (5'-ATTTGCAT-3') and regulates cell type-specific differentiation pathways. Involved in the regulation of keratinocytes differentiation (PubMed:7682011). The POU2F3-POU2AF2/POU2AF3 complex drives the expression of tuft-cell-specific genes, a rare chemosensory cells that coordinate immune and neural functions within mucosal epithelial tissues (By similarity).</text>
</comment>
<comment type="function">
    <molecule>Isoform 2</molecule>
    <text evidence="6">Inhibits transactivation by POU2F1.</text>
</comment>
<comment type="subunit">
    <text evidence="2">Interacts (via the POU domain) with POU2AF1 and POU2AF2 in a DNA-dependent manner; this interaction recruits POU2AF2 to chromatin and increases POU2F3 transactivation activity.</text>
</comment>
<comment type="subcellular location">
    <subcellularLocation>
        <location evidence="1">Nucleus</location>
    </subcellularLocation>
</comment>
<comment type="alternative products">
    <event type="alternative splicing"/>
    <isoform>
        <id>P42571-1</id>
        <name>1</name>
        <name evidence="7">Skn-1a</name>
        <sequence type="displayed"/>
    </isoform>
    <isoform>
        <id>P42571-2</id>
        <name>2</name>
        <name evidence="7">Skn-1i</name>
        <sequence type="described" ref="VSP_002332"/>
    </isoform>
</comment>
<comment type="tissue specificity">
    <text evidence="6">Expressed in epidermis and hair follicles.</text>
</comment>
<comment type="similarity">
    <text evidence="8">Belongs to the POU transcription factor family. Class-2 subfamily.</text>
</comment>
<reference key="1">
    <citation type="journal article" date="1993" name="Science">
        <title>Skn-1a and Skn-1i: two functionally distinct Oct-2-related factors expressed in epidermis.</title>
        <authorList>
            <person name="Andersen B."/>
            <person name="Schonemann M.D."/>
            <person name="Flynn S.E."/>
            <person name="Pearse R.V. II"/>
            <person name="Singh H."/>
            <person name="Rosenfeld M.G."/>
        </authorList>
    </citation>
    <scope>NUCLEOTIDE SEQUENCE [MRNA]</scope>
    <scope>TISSUE SPECIFICITY</scope>
    <scope>FUNCTION (ISOFORMS 1 AND 2)</scope>
    <source>
        <strain>Fischer</strain>
        <tissue>Skin</tissue>
    </source>
</reference>
<reference key="2">
    <citation type="journal article" date="1993" name="Science">
        <authorList>
            <person name="Andersen B."/>
            <person name="Schonemann M.D."/>
            <person name="Flynn S.E."/>
            <person name="Pearse R.V. II"/>
            <person name="Singh H."/>
            <person name="Rosenfeld M.G."/>
        </authorList>
    </citation>
    <scope>ERRATUM OF PUBMED:7682011</scope>
</reference>
<reference key="3">
    <citation type="journal article" date="2004" name="Nature">
        <title>Genome sequence of the Brown Norway rat yields insights into mammalian evolution.</title>
        <authorList>
            <person name="Gibbs R.A."/>
            <person name="Weinstock G.M."/>
            <person name="Metzker M.L."/>
            <person name="Muzny D.M."/>
            <person name="Sodergren E.J."/>
            <person name="Scherer S."/>
            <person name="Scott G."/>
            <person name="Steffen D."/>
            <person name="Worley K.C."/>
            <person name="Burch P.E."/>
            <person name="Okwuonu G."/>
            <person name="Hines S."/>
            <person name="Lewis L."/>
            <person name="Deramo C."/>
            <person name="Delgado O."/>
            <person name="Dugan-Rocha S."/>
            <person name="Miner G."/>
            <person name="Morgan M."/>
            <person name="Hawes A."/>
            <person name="Gill R."/>
            <person name="Holt R.A."/>
            <person name="Adams M.D."/>
            <person name="Amanatides P.G."/>
            <person name="Baden-Tillson H."/>
            <person name="Barnstead M."/>
            <person name="Chin S."/>
            <person name="Evans C.A."/>
            <person name="Ferriera S."/>
            <person name="Fosler C."/>
            <person name="Glodek A."/>
            <person name="Gu Z."/>
            <person name="Jennings D."/>
            <person name="Kraft C.L."/>
            <person name="Nguyen T."/>
            <person name="Pfannkoch C.M."/>
            <person name="Sitter C."/>
            <person name="Sutton G.G."/>
            <person name="Venter J.C."/>
            <person name="Woodage T."/>
            <person name="Smith D."/>
            <person name="Lee H.-M."/>
            <person name="Gustafson E."/>
            <person name="Cahill P."/>
            <person name="Kana A."/>
            <person name="Doucette-Stamm L."/>
            <person name="Weinstock K."/>
            <person name="Fechtel K."/>
            <person name="Weiss R.B."/>
            <person name="Dunn D.M."/>
            <person name="Green E.D."/>
            <person name="Blakesley R.W."/>
            <person name="Bouffard G.G."/>
            <person name="De Jong P.J."/>
            <person name="Osoegawa K."/>
            <person name="Zhu B."/>
            <person name="Marra M."/>
            <person name="Schein J."/>
            <person name="Bosdet I."/>
            <person name="Fjell C."/>
            <person name="Jones S."/>
            <person name="Krzywinski M."/>
            <person name="Mathewson C."/>
            <person name="Siddiqui A."/>
            <person name="Wye N."/>
            <person name="McPherson J."/>
            <person name="Zhao S."/>
            <person name="Fraser C.M."/>
            <person name="Shetty J."/>
            <person name="Shatsman S."/>
            <person name="Geer K."/>
            <person name="Chen Y."/>
            <person name="Abramzon S."/>
            <person name="Nierman W.C."/>
            <person name="Havlak P.H."/>
            <person name="Chen R."/>
            <person name="Durbin K.J."/>
            <person name="Egan A."/>
            <person name="Ren Y."/>
            <person name="Song X.-Z."/>
            <person name="Li B."/>
            <person name="Liu Y."/>
            <person name="Qin X."/>
            <person name="Cawley S."/>
            <person name="Cooney A.J."/>
            <person name="D'Souza L.M."/>
            <person name="Martin K."/>
            <person name="Wu J.Q."/>
            <person name="Gonzalez-Garay M.L."/>
            <person name="Jackson A.R."/>
            <person name="Kalafus K.J."/>
            <person name="McLeod M.P."/>
            <person name="Milosavljevic A."/>
            <person name="Virk D."/>
            <person name="Volkov A."/>
            <person name="Wheeler D.A."/>
            <person name="Zhang Z."/>
            <person name="Bailey J.A."/>
            <person name="Eichler E.E."/>
            <person name="Tuzun E."/>
            <person name="Birney E."/>
            <person name="Mongin E."/>
            <person name="Ureta-Vidal A."/>
            <person name="Woodwark C."/>
            <person name="Zdobnov E."/>
            <person name="Bork P."/>
            <person name="Suyama M."/>
            <person name="Torrents D."/>
            <person name="Alexandersson M."/>
            <person name="Trask B.J."/>
            <person name="Young J.M."/>
            <person name="Huang H."/>
            <person name="Wang H."/>
            <person name="Xing H."/>
            <person name="Daniels S."/>
            <person name="Gietzen D."/>
            <person name="Schmidt J."/>
            <person name="Stevens K."/>
            <person name="Vitt U."/>
            <person name="Wingrove J."/>
            <person name="Camara F."/>
            <person name="Mar Alba M."/>
            <person name="Abril J.F."/>
            <person name="Guigo R."/>
            <person name="Smit A."/>
            <person name="Dubchak I."/>
            <person name="Rubin E.M."/>
            <person name="Couronne O."/>
            <person name="Poliakov A."/>
            <person name="Huebner N."/>
            <person name="Ganten D."/>
            <person name="Goesele C."/>
            <person name="Hummel O."/>
            <person name="Kreitler T."/>
            <person name="Lee Y.-A."/>
            <person name="Monti J."/>
            <person name="Schulz H."/>
            <person name="Zimdahl H."/>
            <person name="Himmelbauer H."/>
            <person name="Lehrach H."/>
            <person name="Jacob H.J."/>
            <person name="Bromberg S."/>
            <person name="Gullings-Handley J."/>
            <person name="Jensen-Seaman M.I."/>
            <person name="Kwitek A.E."/>
            <person name="Lazar J."/>
            <person name="Pasko D."/>
            <person name="Tonellato P.J."/>
            <person name="Twigger S."/>
            <person name="Ponting C.P."/>
            <person name="Duarte J.M."/>
            <person name="Rice S."/>
            <person name="Goodstadt L."/>
            <person name="Beatson S.A."/>
            <person name="Emes R.D."/>
            <person name="Winter E.E."/>
            <person name="Webber C."/>
            <person name="Brandt P."/>
            <person name="Nyakatura G."/>
            <person name="Adetobi M."/>
            <person name="Chiaromonte F."/>
            <person name="Elnitski L."/>
            <person name="Eswara P."/>
            <person name="Hardison R.C."/>
            <person name="Hou M."/>
            <person name="Kolbe D."/>
            <person name="Makova K."/>
            <person name="Miller W."/>
            <person name="Nekrutenko A."/>
            <person name="Riemer C."/>
            <person name="Schwartz S."/>
            <person name="Taylor J."/>
            <person name="Yang S."/>
            <person name="Zhang Y."/>
            <person name="Lindpaintner K."/>
            <person name="Andrews T.D."/>
            <person name="Caccamo M."/>
            <person name="Clamp M."/>
            <person name="Clarke L."/>
            <person name="Curwen V."/>
            <person name="Durbin R.M."/>
            <person name="Eyras E."/>
            <person name="Searle S.M."/>
            <person name="Cooper G.M."/>
            <person name="Batzoglou S."/>
            <person name="Brudno M."/>
            <person name="Sidow A."/>
            <person name="Stone E.A."/>
            <person name="Payseur B.A."/>
            <person name="Bourque G."/>
            <person name="Lopez-Otin C."/>
            <person name="Puente X.S."/>
            <person name="Chakrabarti K."/>
            <person name="Chatterji S."/>
            <person name="Dewey C."/>
            <person name="Pachter L."/>
            <person name="Bray N."/>
            <person name="Yap V.B."/>
            <person name="Caspi A."/>
            <person name="Tesler G."/>
            <person name="Pevzner P.A."/>
            <person name="Haussler D."/>
            <person name="Roskin K.M."/>
            <person name="Baertsch R."/>
            <person name="Clawson H."/>
            <person name="Furey T.S."/>
            <person name="Hinrichs A.S."/>
            <person name="Karolchik D."/>
            <person name="Kent W.J."/>
            <person name="Rosenbloom K.R."/>
            <person name="Trumbower H."/>
            <person name="Weirauch M."/>
            <person name="Cooper D.N."/>
            <person name="Stenson P.D."/>
            <person name="Ma B."/>
            <person name="Brent M."/>
            <person name="Arumugam M."/>
            <person name="Shteynberg D."/>
            <person name="Copley R.R."/>
            <person name="Taylor M.S."/>
            <person name="Riethman H."/>
            <person name="Mudunuri U."/>
            <person name="Peterson J."/>
            <person name="Guyer M."/>
            <person name="Felsenfeld A."/>
            <person name="Old S."/>
            <person name="Mockrin S."/>
            <person name="Collins F.S."/>
        </authorList>
    </citation>
    <scope>NUCLEOTIDE SEQUENCE [LARGE SCALE GENOMIC DNA]</scope>
    <source>
        <strain>Brown Norway</strain>
    </source>
</reference>
<reference key="4">
    <citation type="submission" date="2005-07" db="EMBL/GenBank/DDBJ databases">
        <authorList>
            <person name="Mural R.J."/>
            <person name="Adams M.D."/>
            <person name="Myers E.W."/>
            <person name="Smith H.O."/>
            <person name="Venter J.C."/>
        </authorList>
    </citation>
    <scope>NUCLEOTIDE SEQUENCE [LARGE SCALE GENOMIC DNA]</scope>
</reference>
<evidence type="ECO:0000250" key="1">
    <source>
        <dbReference type="UniProtKB" id="P31362"/>
    </source>
</evidence>
<evidence type="ECO:0000250" key="2">
    <source>
        <dbReference type="UniProtKB" id="Q9UKI9"/>
    </source>
</evidence>
<evidence type="ECO:0000255" key="3">
    <source>
        <dbReference type="PROSITE-ProRule" id="PRU00108"/>
    </source>
</evidence>
<evidence type="ECO:0000255" key="4">
    <source>
        <dbReference type="PROSITE-ProRule" id="PRU00530"/>
    </source>
</evidence>
<evidence type="ECO:0000256" key="5">
    <source>
        <dbReference type="SAM" id="MobiDB-lite"/>
    </source>
</evidence>
<evidence type="ECO:0000269" key="6">
    <source>
    </source>
</evidence>
<evidence type="ECO:0000303" key="7">
    <source>
    </source>
</evidence>
<evidence type="ECO:0000305" key="8"/>
<dbReference type="EMBL" id="L23862">
    <property type="status" value="NOT_ANNOTATED_CDS"/>
    <property type="molecule type" value="mRNA"/>
</dbReference>
<dbReference type="EMBL" id="L23863">
    <property type="status" value="NOT_ANNOTATED_CDS"/>
    <property type="molecule type" value="mRNA"/>
</dbReference>
<dbReference type="EMBL" id="CH473975">
    <property type="protein sequence ID" value="EDL95261.1"/>
    <property type="molecule type" value="Genomic_DNA"/>
</dbReference>
<dbReference type="PIR" id="A46216">
    <property type="entry name" value="A46216"/>
</dbReference>
<dbReference type="RefSeq" id="NP_001099215.1">
    <molecule id="P42571-1"/>
    <property type="nucleotide sequence ID" value="NM_001105745.1"/>
</dbReference>
<dbReference type="SMR" id="P42571"/>
<dbReference type="FunCoup" id="P42571">
    <property type="interactions" value="206"/>
</dbReference>
<dbReference type="STRING" id="10116.ENSRNOP00000012170"/>
<dbReference type="GlyGen" id="P42571">
    <property type="glycosylation" value="1 site"/>
</dbReference>
<dbReference type="PhosphoSitePlus" id="P42571"/>
<dbReference type="PaxDb" id="10116-ENSRNOP00000012170"/>
<dbReference type="Ensembl" id="ENSRNOT00000107784.1">
    <molecule id="P42571-1"/>
    <property type="protein sequence ID" value="ENSRNOP00000084235.1"/>
    <property type="gene ID" value="ENSRNOG00000009118.7"/>
</dbReference>
<dbReference type="GeneID" id="116544"/>
<dbReference type="KEGG" id="rno:116544"/>
<dbReference type="UCSC" id="RGD:621691">
    <molecule id="P42571-1"/>
    <property type="organism name" value="rat"/>
</dbReference>
<dbReference type="AGR" id="RGD:621691"/>
<dbReference type="CTD" id="25833"/>
<dbReference type="RGD" id="621691">
    <property type="gene designation" value="Pou2f3"/>
</dbReference>
<dbReference type="eggNOG" id="KOG3802">
    <property type="taxonomic scope" value="Eukaryota"/>
</dbReference>
<dbReference type="GeneTree" id="ENSGT00940000157627"/>
<dbReference type="InParanoid" id="P42571"/>
<dbReference type="OMA" id="HTEIKMS"/>
<dbReference type="OrthoDB" id="6358449at2759"/>
<dbReference type="PhylomeDB" id="P42571"/>
<dbReference type="PRO" id="PR:P42571"/>
<dbReference type="Proteomes" id="UP000002494">
    <property type="component" value="Chromosome 8"/>
</dbReference>
<dbReference type="Proteomes" id="UP000234681">
    <property type="component" value="Chromosome 8"/>
</dbReference>
<dbReference type="GO" id="GO:0005829">
    <property type="term" value="C:cytosol"/>
    <property type="evidence" value="ECO:0007669"/>
    <property type="project" value="Ensembl"/>
</dbReference>
<dbReference type="GO" id="GO:0016604">
    <property type="term" value="C:nuclear body"/>
    <property type="evidence" value="ECO:0007669"/>
    <property type="project" value="Ensembl"/>
</dbReference>
<dbReference type="GO" id="GO:0005730">
    <property type="term" value="C:nucleolus"/>
    <property type="evidence" value="ECO:0007669"/>
    <property type="project" value="Ensembl"/>
</dbReference>
<dbReference type="GO" id="GO:0005634">
    <property type="term" value="C:nucleus"/>
    <property type="evidence" value="ECO:0000266"/>
    <property type="project" value="RGD"/>
</dbReference>
<dbReference type="GO" id="GO:0005886">
    <property type="term" value="C:plasma membrane"/>
    <property type="evidence" value="ECO:0007669"/>
    <property type="project" value="Ensembl"/>
</dbReference>
<dbReference type="GO" id="GO:0005667">
    <property type="term" value="C:transcription regulator complex"/>
    <property type="evidence" value="ECO:0000266"/>
    <property type="project" value="RGD"/>
</dbReference>
<dbReference type="GO" id="GO:0003677">
    <property type="term" value="F:DNA binding"/>
    <property type="evidence" value="ECO:0000266"/>
    <property type="project" value="RGD"/>
</dbReference>
<dbReference type="GO" id="GO:0001228">
    <property type="term" value="F:DNA-binding transcription activator activity, RNA polymerase II-specific"/>
    <property type="evidence" value="ECO:0000266"/>
    <property type="project" value="RGD"/>
</dbReference>
<dbReference type="GO" id="GO:0000981">
    <property type="term" value="F:DNA-binding transcription factor activity, RNA polymerase II-specific"/>
    <property type="evidence" value="ECO:0000318"/>
    <property type="project" value="GO_Central"/>
</dbReference>
<dbReference type="GO" id="GO:0042802">
    <property type="term" value="F:identical protein binding"/>
    <property type="evidence" value="ECO:0000266"/>
    <property type="project" value="RGD"/>
</dbReference>
<dbReference type="GO" id="GO:0000978">
    <property type="term" value="F:RNA polymerase II cis-regulatory region sequence-specific DNA binding"/>
    <property type="evidence" value="ECO:0000266"/>
    <property type="project" value="RGD"/>
</dbReference>
<dbReference type="GO" id="GO:0043565">
    <property type="term" value="F:sequence-specific DNA binding"/>
    <property type="evidence" value="ECO:0000266"/>
    <property type="project" value="RGD"/>
</dbReference>
<dbReference type="GO" id="GO:1990837">
    <property type="term" value="F:sequence-specific double-stranded DNA binding"/>
    <property type="evidence" value="ECO:0000266"/>
    <property type="project" value="RGD"/>
</dbReference>
<dbReference type="GO" id="GO:0030154">
    <property type="term" value="P:cell differentiation"/>
    <property type="evidence" value="ECO:0000266"/>
    <property type="project" value="RGD"/>
</dbReference>
<dbReference type="GO" id="GO:0008544">
    <property type="term" value="P:epidermis development"/>
    <property type="evidence" value="ECO:0000314"/>
    <property type="project" value="RGD"/>
</dbReference>
<dbReference type="GO" id="GO:0030216">
    <property type="term" value="P:keratinocyte differentiation"/>
    <property type="evidence" value="ECO:0000266"/>
    <property type="project" value="RGD"/>
</dbReference>
<dbReference type="GO" id="GO:0043922">
    <property type="term" value="P:negative regulation by host of viral transcription"/>
    <property type="evidence" value="ECO:0007669"/>
    <property type="project" value="Ensembl"/>
</dbReference>
<dbReference type="GO" id="GO:0045944">
    <property type="term" value="P:positive regulation of transcription by RNA polymerase II"/>
    <property type="evidence" value="ECO:0000266"/>
    <property type="project" value="RGD"/>
</dbReference>
<dbReference type="GO" id="GO:0006357">
    <property type="term" value="P:regulation of transcription by RNA polymerase II"/>
    <property type="evidence" value="ECO:0000314"/>
    <property type="project" value="RGD"/>
</dbReference>
<dbReference type="GO" id="GO:0042060">
    <property type="term" value="P:wound healing"/>
    <property type="evidence" value="ECO:0000266"/>
    <property type="project" value="RGD"/>
</dbReference>
<dbReference type="CDD" id="cd00086">
    <property type="entry name" value="homeodomain"/>
    <property type="match status" value="1"/>
</dbReference>
<dbReference type="FunFam" id="1.10.10.60:FF:000005">
    <property type="entry name" value="POU domain protein"/>
    <property type="match status" value="1"/>
</dbReference>
<dbReference type="FunFam" id="1.10.260.40:FF:000001">
    <property type="entry name" value="POU domain protein"/>
    <property type="match status" value="1"/>
</dbReference>
<dbReference type="Gene3D" id="1.10.10.60">
    <property type="entry name" value="Homeodomain-like"/>
    <property type="match status" value="1"/>
</dbReference>
<dbReference type="Gene3D" id="1.10.260.40">
    <property type="entry name" value="lambda repressor-like DNA-binding domains"/>
    <property type="match status" value="1"/>
</dbReference>
<dbReference type="InterPro" id="IPR001356">
    <property type="entry name" value="HD"/>
</dbReference>
<dbReference type="InterPro" id="IPR017970">
    <property type="entry name" value="Homeobox_CS"/>
</dbReference>
<dbReference type="InterPro" id="IPR009057">
    <property type="entry name" value="Homeodomain-like_sf"/>
</dbReference>
<dbReference type="InterPro" id="IPR010982">
    <property type="entry name" value="Lambda_DNA-bd_dom_sf"/>
</dbReference>
<dbReference type="InterPro" id="IPR013847">
    <property type="entry name" value="POU"/>
</dbReference>
<dbReference type="InterPro" id="IPR000327">
    <property type="entry name" value="POU_dom"/>
</dbReference>
<dbReference type="InterPro" id="IPR050255">
    <property type="entry name" value="POU_domain_TF"/>
</dbReference>
<dbReference type="InterPro" id="IPR000972">
    <property type="entry name" value="TF_octamer"/>
</dbReference>
<dbReference type="PANTHER" id="PTHR11636">
    <property type="entry name" value="POU DOMAIN"/>
    <property type="match status" value="1"/>
</dbReference>
<dbReference type="PANTHER" id="PTHR11636:SF81">
    <property type="entry name" value="POU DOMAIN, CLASS 2, TRANSCRIPTION FACTOR 3"/>
    <property type="match status" value="1"/>
</dbReference>
<dbReference type="Pfam" id="PF00046">
    <property type="entry name" value="Homeodomain"/>
    <property type="match status" value="1"/>
</dbReference>
<dbReference type="Pfam" id="PF00157">
    <property type="entry name" value="Pou"/>
    <property type="match status" value="1"/>
</dbReference>
<dbReference type="PRINTS" id="PR00029">
    <property type="entry name" value="OCTAMER"/>
</dbReference>
<dbReference type="PRINTS" id="PR00028">
    <property type="entry name" value="POUDOMAIN"/>
</dbReference>
<dbReference type="SMART" id="SM00389">
    <property type="entry name" value="HOX"/>
    <property type="match status" value="1"/>
</dbReference>
<dbReference type="SMART" id="SM00352">
    <property type="entry name" value="POU"/>
    <property type="match status" value="1"/>
</dbReference>
<dbReference type="SUPFAM" id="SSF46689">
    <property type="entry name" value="Homeodomain-like"/>
    <property type="match status" value="1"/>
</dbReference>
<dbReference type="SUPFAM" id="SSF47413">
    <property type="entry name" value="lambda repressor-like DNA-binding domains"/>
    <property type="match status" value="1"/>
</dbReference>
<dbReference type="PROSITE" id="PS00027">
    <property type="entry name" value="HOMEOBOX_1"/>
    <property type="match status" value="1"/>
</dbReference>
<dbReference type="PROSITE" id="PS50071">
    <property type="entry name" value="HOMEOBOX_2"/>
    <property type="match status" value="1"/>
</dbReference>
<dbReference type="PROSITE" id="PS00035">
    <property type="entry name" value="POU_1"/>
    <property type="match status" value="1"/>
</dbReference>
<dbReference type="PROSITE" id="PS00465">
    <property type="entry name" value="POU_2"/>
    <property type="match status" value="1"/>
</dbReference>
<dbReference type="PROSITE" id="PS51179">
    <property type="entry name" value="POU_3"/>
    <property type="match status" value="1"/>
</dbReference>
<protein>
    <recommendedName>
        <fullName>POU domain, class 2, transcription factor 3</fullName>
    </recommendedName>
    <alternativeName>
        <fullName>Octamer-binding protein 11</fullName>
        <shortName>Oct-11</shortName>
    </alternativeName>
    <alternativeName>
        <fullName>Octamer-binding transcription factor 11</fullName>
        <shortName>OTF-11</shortName>
    </alternativeName>
    <alternativeName>
        <fullName>Transcription factor Skn-1</fullName>
    </alternativeName>
</protein>
<accession>P42571</accession>
<accession>A0A8I6A0U7</accession>
<accession>P42572</accession>
<keyword id="KW-0010">Activator</keyword>
<keyword id="KW-0025">Alternative splicing</keyword>
<keyword id="KW-0238">DNA-binding</keyword>
<keyword id="KW-0371">Homeobox</keyword>
<keyword id="KW-0539">Nucleus</keyword>
<keyword id="KW-1185">Reference proteome</keyword>
<keyword id="KW-0804">Transcription</keyword>
<keyword id="KW-0805">Transcription regulation</keyword>
<name>PO2F3_RAT</name>
<feature type="chain" id="PRO_0000100719" description="POU domain, class 2, transcription factor 3">
    <location>
        <begin position="1"/>
        <end position="430"/>
    </location>
</feature>
<feature type="domain" description="POU-specific" evidence="4">
    <location>
        <begin position="176"/>
        <end position="250"/>
    </location>
</feature>
<feature type="DNA-binding region" description="Homeobox" evidence="3">
    <location>
        <begin position="274"/>
        <end position="333"/>
    </location>
</feature>
<feature type="region of interest" description="Disordered" evidence="5">
    <location>
        <begin position="1"/>
        <end position="40"/>
    </location>
</feature>
<feature type="region of interest" description="Disordered" evidence="5">
    <location>
        <begin position="60"/>
        <end position="81"/>
    </location>
</feature>
<feature type="region of interest" description="Disordered" evidence="5">
    <location>
        <begin position="129"/>
        <end position="180"/>
    </location>
</feature>
<feature type="region of interest" description="Disordered" evidence="5">
    <location>
        <begin position="248"/>
        <end position="267"/>
    </location>
</feature>
<feature type="region of interest" description="Disordered" evidence="5">
    <location>
        <begin position="355"/>
        <end position="413"/>
    </location>
</feature>
<feature type="compositionally biased region" description="Polar residues" evidence="5">
    <location>
        <begin position="23"/>
        <end position="32"/>
    </location>
</feature>
<feature type="compositionally biased region" description="Polar residues" evidence="5">
    <location>
        <begin position="67"/>
        <end position="78"/>
    </location>
</feature>
<feature type="compositionally biased region" description="Low complexity" evidence="5">
    <location>
        <begin position="129"/>
        <end position="139"/>
    </location>
</feature>
<feature type="compositionally biased region" description="Low complexity" evidence="5">
    <location>
        <begin position="251"/>
        <end position="267"/>
    </location>
</feature>
<feature type="compositionally biased region" description="Low complexity" evidence="5">
    <location>
        <begin position="355"/>
        <end position="364"/>
    </location>
</feature>
<feature type="compositionally biased region" description="Low complexity" evidence="5">
    <location>
        <begin position="374"/>
        <end position="390"/>
    </location>
</feature>
<feature type="compositionally biased region" description="Polar residues" evidence="5">
    <location>
        <begin position="392"/>
        <end position="413"/>
    </location>
</feature>
<feature type="splice variant" id="VSP_002332" description="In isoform 2." evidence="8">
    <original>MVNLEPMHTEIKMSGDVADSTDARSTFGQVESGNDRNGLDFNRQIKTEDLGDTLQQSLSHRPCHLSQGPTMMPGNQMSGDMASLHPLQQLVLVPGHLQSVSQFLLSQTPPGQQ</original>
    <variation>MVSMFSLSFKWPGFCLFVCLFLCPFVLPCHS</variation>
    <location>
        <begin position="1"/>
        <end position="113"/>
    </location>
</feature>
<feature type="sequence conflict" description="In Ref. 1; no nucleotide entry." ref="1">
    <original>QQ</original>
    <variation>HE</variation>
    <location>
        <begin position="55"/>
        <end position="56"/>
    </location>
</feature>
<feature type="sequence conflict" description="In Ref. 1; no nucleotide entry." ref="1">
    <original>SQ</original>
    <variation>TE</variation>
    <location>
        <begin position="66"/>
        <end position="67"/>
    </location>
</feature>
<feature type="sequence conflict" description="In Ref. 1; no nucleotide entry." ref="1">
    <original>S</original>
    <variation>A</variation>
    <location>
        <position position="254"/>
    </location>
</feature>
<gene>
    <name type="primary">Pou2f3</name>
    <name type="synonym">Otf11</name>
    <name type="synonym">Skn-1</name>
    <name type="synonym">Skn1</name>
</gene>